<protein>
    <recommendedName>
        <fullName evidence="1">Large ribosomal subunit protein uL3</fullName>
    </recommendedName>
    <alternativeName>
        <fullName evidence="2">50S ribosomal protein L3</fullName>
    </alternativeName>
</protein>
<name>RL3_BIFLO</name>
<reference key="1">
    <citation type="journal article" date="2002" name="Proc. Natl. Acad. Sci. U.S.A.">
        <title>The genome sequence of Bifidobacterium longum reflects its adaptation to the human gastrointestinal tract.</title>
        <authorList>
            <person name="Schell M.A."/>
            <person name="Karmirantzou M."/>
            <person name="Snel B."/>
            <person name="Vilanova D."/>
            <person name="Berger B."/>
            <person name="Pessi G."/>
            <person name="Zwahlen M.-C."/>
            <person name="Desiere F."/>
            <person name="Bork P."/>
            <person name="Delley M."/>
            <person name="Pridmore R.D."/>
            <person name="Arigoni F."/>
        </authorList>
    </citation>
    <scope>NUCLEOTIDE SEQUENCE [LARGE SCALE GENOMIC DNA]</scope>
    <source>
        <strain>NCC 2705</strain>
    </source>
</reference>
<keyword id="KW-1185">Reference proteome</keyword>
<keyword id="KW-0687">Ribonucleoprotein</keyword>
<keyword id="KW-0689">Ribosomal protein</keyword>
<keyword id="KW-0694">RNA-binding</keyword>
<keyword id="KW-0699">rRNA-binding</keyword>
<proteinExistence type="inferred from homology"/>
<accession>Q8G417</accession>
<organism>
    <name type="scientific">Bifidobacterium longum (strain NCC 2705)</name>
    <dbReference type="NCBI Taxonomy" id="206672"/>
    <lineage>
        <taxon>Bacteria</taxon>
        <taxon>Bacillati</taxon>
        <taxon>Actinomycetota</taxon>
        <taxon>Actinomycetes</taxon>
        <taxon>Bifidobacteriales</taxon>
        <taxon>Bifidobacteriaceae</taxon>
        <taxon>Bifidobacterium</taxon>
    </lineage>
</organism>
<gene>
    <name evidence="1" type="primary">rplC</name>
    <name type="ordered locus">BL1578</name>
</gene>
<dbReference type="EMBL" id="AE014295">
    <property type="protein sequence ID" value="AAN25369.1"/>
    <property type="molecule type" value="Genomic_DNA"/>
</dbReference>
<dbReference type="RefSeq" id="NP_696733.1">
    <property type="nucleotide sequence ID" value="NC_004307.2"/>
</dbReference>
<dbReference type="RefSeq" id="WP_007053031.1">
    <property type="nucleotide sequence ID" value="NC_004307.2"/>
</dbReference>
<dbReference type="SMR" id="Q8G417"/>
<dbReference type="STRING" id="206672.BL1578"/>
<dbReference type="EnsemblBacteria" id="AAN25369">
    <property type="protein sequence ID" value="AAN25369"/>
    <property type="gene ID" value="BL1578"/>
</dbReference>
<dbReference type="GeneID" id="69578897"/>
<dbReference type="KEGG" id="blo:BL1578"/>
<dbReference type="PATRIC" id="fig|206672.9.peg.1635"/>
<dbReference type="HOGENOM" id="CLU_044142_4_1_11"/>
<dbReference type="OrthoDB" id="9806135at2"/>
<dbReference type="PhylomeDB" id="Q8G417"/>
<dbReference type="Proteomes" id="UP000000439">
    <property type="component" value="Chromosome"/>
</dbReference>
<dbReference type="GO" id="GO:0022625">
    <property type="term" value="C:cytosolic large ribosomal subunit"/>
    <property type="evidence" value="ECO:0007669"/>
    <property type="project" value="TreeGrafter"/>
</dbReference>
<dbReference type="GO" id="GO:0019843">
    <property type="term" value="F:rRNA binding"/>
    <property type="evidence" value="ECO:0007669"/>
    <property type="project" value="UniProtKB-UniRule"/>
</dbReference>
<dbReference type="GO" id="GO:0003735">
    <property type="term" value="F:structural constituent of ribosome"/>
    <property type="evidence" value="ECO:0007669"/>
    <property type="project" value="InterPro"/>
</dbReference>
<dbReference type="GO" id="GO:0006412">
    <property type="term" value="P:translation"/>
    <property type="evidence" value="ECO:0007669"/>
    <property type="project" value="UniProtKB-UniRule"/>
</dbReference>
<dbReference type="FunFam" id="2.40.30.10:FF:000004">
    <property type="entry name" value="50S ribosomal protein L3"/>
    <property type="match status" value="1"/>
</dbReference>
<dbReference type="FunFam" id="3.30.160.810:FF:000001">
    <property type="entry name" value="50S ribosomal protein L3"/>
    <property type="match status" value="1"/>
</dbReference>
<dbReference type="Gene3D" id="3.30.160.810">
    <property type="match status" value="1"/>
</dbReference>
<dbReference type="Gene3D" id="2.40.30.10">
    <property type="entry name" value="Translation factors"/>
    <property type="match status" value="1"/>
</dbReference>
<dbReference type="HAMAP" id="MF_01325_B">
    <property type="entry name" value="Ribosomal_uL3_B"/>
    <property type="match status" value="1"/>
</dbReference>
<dbReference type="InterPro" id="IPR000597">
    <property type="entry name" value="Ribosomal_uL3"/>
</dbReference>
<dbReference type="InterPro" id="IPR019927">
    <property type="entry name" value="Ribosomal_uL3_bac/org-type"/>
</dbReference>
<dbReference type="InterPro" id="IPR019926">
    <property type="entry name" value="Ribosomal_uL3_CS"/>
</dbReference>
<dbReference type="InterPro" id="IPR009000">
    <property type="entry name" value="Transl_B-barrel_sf"/>
</dbReference>
<dbReference type="NCBIfam" id="TIGR03625">
    <property type="entry name" value="L3_bact"/>
    <property type="match status" value="1"/>
</dbReference>
<dbReference type="PANTHER" id="PTHR11229">
    <property type="entry name" value="50S RIBOSOMAL PROTEIN L3"/>
    <property type="match status" value="1"/>
</dbReference>
<dbReference type="PANTHER" id="PTHR11229:SF16">
    <property type="entry name" value="LARGE RIBOSOMAL SUBUNIT PROTEIN UL3C"/>
    <property type="match status" value="1"/>
</dbReference>
<dbReference type="Pfam" id="PF00297">
    <property type="entry name" value="Ribosomal_L3"/>
    <property type="match status" value="1"/>
</dbReference>
<dbReference type="SUPFAM" id="SSF50447">
    <property type="entry name" value="Translation proteins"/>
    <property type="match status" value="1"/>
</dbReference>
<dbReference type="PROSITE" id="PS00474">
    <property type="entry name" value="RIBOSOMAL_L3"/>
    <property type="match status" value="1"/>
</dbReference>
<feature type="chain" id="PRO_0000077068" description="Large ribosomal subunit protein uL3">
    <location>
        <begin position="1"/>
        <end position="213"/>
    </location>
</feature>
<comment type="function">
    <text evidence="1">One of the primary rRNA binding proteins, it binds directly near the 3'-end of the 23S rRNA, where it nucleates assembly of the 50S subunit.</text>
</comment>
<comment type="subunit">
    <text evidence="1">Part of the 50S ribosomal subunit. Forms a cluster with proteins L14 and L19.</text>
</comment>
<comment type="similarity">
    <text evidence="1">Belongs to the universal ribosomal protein uL3 family.</text>
</comment>
<sequence>MSNRKALLGKKLGMSQVWDENGFFVPVTLVDVSTNVVTAVKTEESDGYKAVQLGYGAIDPTKVTKPLAGHFAKAGVTPRRHLVEVRTDDVDQFEAGQELAADLFEEGAEVDVTGTTKGKGFAGTIKRWGFKSYRRTHGSHKNERRPGSVGACATPSRILKGKRMAGRMGHVTATTQNLTVVSADVENGILAIKGAIPGPKGGIVLVRSAVKGA</sequence>
<evidence type="ECO:0000255" key="1">
    <source>
        <dbReference type="HAMAP-Rule" id="MF_01325"/>
    </source>
</evidence>
<evidence type="ECO:0000305" key="2"/>